<keyword id="KW-0143">Chaperone</keyword>
<keyword id="KW-0539">Nucleus</keyword>
<keyword id="KW-1185">Reference proteome</keyword>
<dbReference type="EMBL" id="BC054255">
    <property type="protein sequence ID" value="AAH54255.1"/>
    <property type="molecule type" value="mRNA"/>
</dbReference>
<dbReference type="RefSeq" id="NP_001080434.1">
    <property type="nucleotide sequence ID" value="NM_001086965.2"/>
</dbReference>
<dbReference type="SMR" id="Q7SYV1"/>
<dbReference type="DNASU" id="380126"/>
<dbReference type="GeneID" id="380126"/>
<dbReference type="KEGG" id="xla:380126"/>
<dbReference type="AGR" id="Xenbase:XB-GENE-1003813"/>
<dbReference type="CTD" id="380126"/>
<dbReference type="Xenbase" id="XB-GENE-1003813">
    <property type="gene designation" value="psmg2.L"/>
</dbReference>
<dbReference type="OrthoDB" id="10260712at2759"/>
<dbReference type="Proteomes" id="UP000186698">
    <property type="component" value="Chromosome 6L"/>
</dbReference>
<dbReference type="Bgee" id="380126">
    <property type="expression patterns" value="Expressed in testis and 19 other cell types or tissues"/>
</dbReference>
<dbReference type="GO" id="GO:0005829">
    <property type="term" value="C:cytosol"/>
    <property type="evidence" value="ECO:0000318"/>
    <property type="project" value="GO_Central"/>
</dbReference>
<dbReference type="GO" id="GO:0005634">
    <property type="term" value="C:nucleus"/>
    <property type="evidence" value="ECO:0000250"/>
    <property type="project" value="UniProtKB"/>
</dbReference>
<dbReference type="GO" id="GO:0051131">
    <property type="term" value="P:chaperone-mediated protein complex assembly"/>
    <property type="evidence" value="ECO:0000250"/>
    <property type="project" value="UniProtKB"/>
</dbReference>
<dbReference type="GO" id="GO:0043248">
    <property type="term" value="P:proteasome assembly"/>
    <property type="evidence" value="ECO:0000318"/>
    <property type="project" value="GO_Central"/>
</dbReference>
<dbReference type="FunFam" id="3.40.50.10900:FF:000001">
    <property type="entry name" value="Proteasome assembly chaperone 2"/>
    <property type="match status" value="1"/>
</dbReference>
<dbReference type="Gene3D" id="3.40.50.10900">
    <property type="entry name" value="PAC-like subunit"/>
    <property type="match status" value="1"/>
</dbReference>
<dbReference type="InterPro" id="IPR019151">
    <property type="entry name" value="Proteasome_assmbl_chaperone_2"/>
</dbReference>
<dbReference type="InterPro" id="IPR016562">
    <property type="entry name" value="Proteasome_assmbl_chp_2_euk"/>
</dbReference>
<dbReference type="InterPro" id="IPR038389">
    <property type="entry name" value="PSMG2_sf"/>
</dbReference>
<dbReference type="PANTHER" id="PTHR12970">
    <property type="entry name" value="PROTEASOME ASSEMBLY CHAPERONE 2"/>
    <property type="match status" value="1"/>
</dbReference>
<dbReference type="PANTHER" id="PTHR12970:SF1">
    <property type="entry name" value="PROTEASOME ASSEMBLY CHAPERONE 2"/>
    <property type="match status" value="1"/>
</dbReference>
<dbReference type="Pfam" id="PF09754">
    <property type="entry name" value="PAC2"/>
    <property type="match status" value="1"/>
</dbReference>
<dbReference type="PIRSF" id="PIRSF010044">
    <property type="entry name" value="UCP010044"/>
    <property type="match status" value="1"/>
</dbReference>
<dbReference type="SUPFAM" id="SSF159659">
    <property type="entry name" value="Cgl1923-like"/>
    <property type="match status" value="1"/>
</dbReference>
<organism>
    <name type="scientific">Xenopus laevis</name>
    <name type="common">African clawed frog</name>
    <dbReference type="NCBI Taxonomy" id="8355"/>
    <lineage>
        <taxon>Eukaryota</taxon>
        <taxon>Metazoa</taxon>
        <taxon>Chordata</taxon>
        <taxon>Craniata</taxon>
        <taxon>Vertebrata</taxon>
        <taxon>Euteleostomi</taxon>
        <taxon>Amphibia</taxon>
        <taxon>Batrachia</taxon>
        <taxon>Anura</taxon>
        <taxon>Pipoidea</taxon>
        <taxon>Pipidae</taxon>
        <taxon>Xenopodinae</taxon>
        <taxon>Xenopus</taxon>
        <taxon>Xenopus</taxon>
    </lineage>
</organism>
<comment type="function">
    <text evidence="1">Chaperone protein which promotes assembly of the 20S proteasome as part of a heterodimer with psmg1.</text>
</comment>
<comment type="subunit">
    <text evidence="1">Forms a heterodimer with psmg1.</text>
</comment>
<comment type="subcellular location">
    <subcellularLocation>
        <location evidence="3">Nucleus</location>
    </subcellularLocation>
</comment>
<comment type="PTM">
    <text evidence="2">Degraded by the proteasome upon completion of 20S proteasome maturation.</text>
</comment>
<comment type="similarity">
    <text evidence="4">Belongs to the PSMG2 family.</text>
</comment>
<accession>Q7SYV1</accession>
<reference evidence="5" key="1">
    <citation type="submission" date="2003-06" db="EMBL/GenBank/DDBJ databases">
        <authorList>
            <consortium name="NIH - Xenopus Gene Collection (XGC) project"/>
        </authorList>
    </citation>
    <scope>NUCLEOTIDE SEQUENCE [LARGE SCALE MRNA]</scope>
    <source>
        <tissue evidence="5">Tadpole</tissue>
    </source>
</reference>
<evidence type="ECO:0000250" key="1"/>
<evidence type="ECO:0000250" key="2">
    <source>
        <dbReference type="UniProtKB" id="Q969U7"/>
    </source>
</evidence>
<evidence type="ECO:0000250" key="3">
    <source>
        <dbReference type="UniProtKB" id="Q9EST4"/>
    </source>
</evidence>
<evidence type="ECO:0000255" key="4"/>
<evidence type="ECO:0000312" key="5">
    <source>
        <dbReference type="EMBL" id="AAH54255.1"/>
    </source>
</evidence>
<name>PSMG2_XENLA</name>
<gene>
    <name evidence="2" type="primary">psmg2</name>
</gene>
<protein>
    <recommendedName>
        <fullName>Proteasome assembly chaperone 2</fullName>
    </recommendedName>
</protein>
<proteinExistence type="evidence at transcript level"/>
<feature type="chain" id="PRO_0000322555" description="Proteasome assembly chaperone 2">
    <location>
        <begin position="1"/>
        <end position="259"/>
    </location>
</feature>
<sequence>MFVPVGSEQDFPSVSTLLLPAISVGNVGQLAIDLIISTLNIPKVGYFYTDCLVPMVGNNPYETNEENAKELCTNAEVYALPSQKLAVLQLRSLVIKKKSKSFRQALVSWIKRCAFARVIFLSSCHAYHRDDKQLFGTPFRYLVTPALQKSVADVLSELEWKEMEKVSSYPELNDNEKKLFIPGGGFTKAFYNDCCLEDLQMAVVLKFCSEGDNVPDAFSLLNQVNEWLHLVEPTNGDVKWKSPRSWRLLFGSGLPPAIF</sequence>